<comment type="function">
    <text evidence="2">Catalyzes the reversible phosphorolytic breakdown of the N-glycosidic bond in the beta-(deoxy)ribonucleoside molecules, with the formation of the corresponding free purine bases and pentose-1-phosphate.</text>
</comment>
<comment type="catalytic activity">
    <reaction evidence="2">
        <text>a purine D-ribonucleoside + phosphate = a purine nucleobase + alpha-D-ribose 1-phosphate</text>
        <dbReference type="Rhea" id="RHEA:19805"/>
        <dbReference type="ChEBI" id="CHEBI:26386"/>
        <dbReference type="ChEBI" id="CHEBI:43474"/>
        <dbReference type="ChEBI" id="CHEBI:57720"/>
        <dbReference type="ChEBI" id="CHEBI:142355"/>
        <dbReference type="EC" id="2.4.2.1"/>
    </reaction>
</comment>
<comment type="catalytic activity">
    <reaction evidence="2">
        <text>a purine 2'-deoxy-D-ribonucleoside + phosphate = a purine nucleobase + 2-deoxy-alpha-D-ribose 1-phosphate</text>
        <dbReference type="Rhea" id="RHEA:36431"/>
        <dbReference type="ChEBI" id="CHEBI:26386"/>
        <dbReference type="ChEBI" id="CHEBI:43474"/>
        <dbReference type="ChEBI" id="CHEBI:57259"/>
        <dbReference type="ChEBI" id="CHEBI:142361"/>
        <dbReference type="EC" id="2.4.2.1"/>
    </reaction>
</comment>
<comment type="subunit">
    <text evidence="2">Homohexamer; trimer of homodimers.</text>
</comment>
<comment type="similarity">
    <text evidence="2">Belongs to the PNP/UDP phosphorylase family.</text>
</comment>
<protein>
    <recommendedName>
        <fullName evidence="2">Purine nucleoside phosphorylase DeoD-type</fullName>
        <shortName evidence="2">PNP</shortName>
        <ecNumber evidence="2">2.4.2.1</ecNumber>
    </recommendedName>
</protein>
<keyword id="KW-0328">Glycosyltransferase</keyword>
<keyword id="KW-0808">Transferase</keyword>
<evidence type="ECO:0000250" key="1">
    <source>
        <dbReference type="UniProtKB" id="P50389"/>
    </source>
</evidence>
<evidence type="ECO:0000255" key="2">
    <source>
        <dbReference type="HAMAP-Rule" id="MF_01627"/>
    </source>
</evidence>
<gene>
    <name evidence="2" type="primary">deoD</name>
    <name type="ordered locus">SPG_0756</name>
</gene>
<accession>B5E3K8</accession>
<sequence>MSIHIAAQQGEIADKILLPGDPLRAKFIAENFLGDAVCFNEVRNMFGYTGTYKGHRVSVMGTGMGMPSISIYARELIVDYGVKKLIRVGTAGSLNEEVHVRELVLAQAAATNSNIVRNDWPQYDFPQIASFDLLDKAYHIAKELGMTTHVGNVLSSDVFYSNYFEKNIELGKWGVKAVEMEAAALYYLAAQYHVDALAIMTISDSLVNPDEDTTAEERQNTFTDMMKVGLETLIAE</sequence>
<dbReference type="EC" id="2.4.2.1" evidence="2"/>
<dbReference type="EMBL" id="CP001015">
    <property type="protein sequence ID" value="ACF54941.1"/>
    <property type="molecule type" value="Genomic_DNA"/>
</dbReference>
<dbReference type="SMR" id="B5E3K8"/>
<dbReference type="KEGG" id="spx:SPG_0756"/>
<dbReference type="HOGENOM" id="CLU_068457_2_0_9"/>
<dbReference type="GO" id="GO:0005829">
    <property type="term" value="C:cytosol"/>
    <property type="evidence" value="ECO:0007669"/>
    <property type="project" value="TreeGrafter"/>
</dbReference>
<dbReference type="GO" id="GO:0004731">
    <property type="term" value="F:purine-nucleoside phosphorylase activity"/>
    <property type="evidence" value="ECO:0007669"/>
    <property type="project" value="UniProtKB-UniRule"/>
</dbReference>
<dbReference type="GO" id="GO:0006152">
    <property type="term" value="P:purine nucleoside catabolic process"/>
    <property type="evidence" value="ECO:0007669"/>
    <property type="project" value="TreeGrafter"/>
</dbReference>
<dbReference type="CDD" id="cd09006">
    <property type="entry name" value="PNP_EcPNPI-like"/>
    <property type="match status" value="1"/>
</dbReference>
<dbReference type="Gene3D" id="3.40.50.1580">
    <property type="entry name" value="Nucleoside phosphorylase domain"/>
    <property type="match status" value="1"/>
</dbReference>
<dbReference type="HAMAP" id="MF_01627">
    <property type="entry name" value="Pur_nucleosid_phosp"/>
    <property type="match status" value="1"/>
</dbReference>
<dbReference type="InterPro" id="IPR004402">
    <property type="entry name" value="DeoD-type"/>
</dbReference>
<dbReference type="InterPro" id="IPR018016">
    <property type="entry name" value="Nucleoside_phosphorylase_CS"/>
</dbReference>
<dbReference type="InterPro" id="IPR000845">
    <property type="entry name" value="Nucleoside_phosphorylase_d"/>
</dbReference>
<dbReference type="InterPro" id="IPR035994">
    <property type="entry name" value="Nucleoside_phosphorylase_sf"/>
</dbReference>
<dbReference type="NCBIfam" id="TIGR00107">
    <property type="entry name" value="deoD"/>
    <property type="match status" value="1"/>
</dbReference>
<dbReference type="NCBIfam" id="NF004489">
    <property type="entry name" value="PRK05819.1"/>
    <property type="match status" value="1"/>
</dbReference>
<dbReference type="PANTHER" id="PTHR43691:SF11">
    <property type="entry name" value="FI09636P-RELATED"/>
    <property type="match status" value="1"/>
</dbReference>
<dbReference type="PANTHER" id="PTHR43691">
    <property type="entry name" value="URIDINE PHOSPHORYLASE"/>
    <property type="match status" value="1"/>
</dbReference>
<dbReference type="Pfam" id="PF01048">
    <property type="entry name" value="PNP_UDP_1"/>
    <property type="match status" value="1"/>
</dbReference>
<dbReference type="SUPFAM" id="SSF53167">
    <property type="entry name" value="Purine and uridine phosphorylases"/>
    <property type="match status" value="1"/>
</dbReference>
<dbReference type="PROSITE" id="PS01232">
    <property type="entry name" value="PNP_UDP_1"/>
    <property type="match status" value="1"/>
</dbReference>
<feature type="chain" id="PRO_1000186226" description="Purine nucleoside phosphorylase DeoD-type">
    <location>
        <begin position="1"/>
        <end position="236"/>
    </location>
</feature>
<feature type="active site" description="Proton donor" evidence="2">
    <location>
        <position position="204"/>
    </location>
</feature>
<feature type="binding site" evidence="1">
    <location>
        <position position="4"/>
    </location>
    <ligand>
        <name>a purine D-ribonucleoside</name>
        <dbReference type="ChEBI" id="CHEBI:142355"/>
        <note>ligand shared between dimeric partners</note>
    </ligand>
</feature>
<feature type="binding site" description="in other chain" evidence="1">
    <location>
        <position position="20"/>
    </location>
    <ligand>
        <name>phosphate</name>
        <dbReference type="ChEBI" id="CHEBI:43474"/>
        <note>ligand shared between dimeric partners</note>
    </ligand>
</feature>
<feature type="binding site" description="in other chain" evidence="1">
    <location>
        <position position="24"/>
    </location>
    <ligand>
        <name>phosphate</name>
        <dbReference type="ChEBI" id="CHEBI:43474"/>
        <note>ligand shared between dimeric partners</note>
    </ligand>
</feature>
<feature type="binding site" evidence="1">
    <location>
        <position position="43"/>
    </location>
    <ligand>
        <name>phosphate</name>
        <dbReference type="ChEBI" id="CHEBI:43474"/>
        <note>ligand shared between dimeric partners</note>
    </ligand>
</feature>
<feature type="binding site" description="in other chain" evidence="1">
    <location>
        <begin position="87"/>
        <end position="90"/>
    </location>
    <ligand>
        <name>phosphate</name>
        <dbReference type="ChEBI" id="CHEBI:43474"/>
        <note>ligand shared between dimeric partners</note>
    </ligand>
</feature>
<feature type="binding site" description="in other chain" evidence="1">
    <location>
        <begin position="179"/>
        <end position="181"/>
    </location>
    <ligand>
        <name>a purine D-ribonucleoside</name>
        <dbReference type="ChEBI" id="CHEBI:142355"/>
        <note>ligand shared between dimeric partners</note>
    </ligand>
</feature>
<feature type="binding site" description="in other chain" evidence="1">
    <location>
        <begin position="203"/>
        <end position="204"/>
    </location>
    <ligand>
        <name>a purine D-ribonucleoside</name>
        <dbReference type="ChEBI" id="CHEBI:142355"/>
        <note>ligand shared between dimeric partners</note>
    </ligand>
</feature>
<feature type="site" description="Important for catalytic activity" evidence="2">
    <location>
        <position position="218"/>
    </location>
</feature>
<name>DEOD_STRP4</name>
<organism>
    <name type="scientific">Streptococcus pneumoniae serotype 19F (strain G54)</name>
    <dbReference type="NCBI Taxonomy" id="512566"/>
    <lineage>
        <taxon>Bacteria</taxon>
        <taxon>Bacillati</taxon>
        <taxon>Bacillota</taxon>
        <taxon>Bacilli</taxon>
        <taxon>Lactobacillales</taxon>
        <taxon>Streptococcaceae</taxon>
        <taxon>Streptococcus</taxon>
    </lineage>
</organism>
<reference key="1">
    <citation type="journal article" date="2001" name="Microb. Drug Resist.">
        <title>Annotated draft genomic sequence from a Streptococcus pneumoniae type 19F clinical isolate.</title>
        <authorList>
            <person name="Dopazo J."/>
            <person name="Mendoza A."/>
            <person name="Herrero J."/>
            <person name="Caldara F."/>
            <person name="Humbert Y."/>
            <person name="Friedli L."/>
            <person name="Guerrier M."/>
            <person name="Grand-Schenk E."/>
            <person name="Gandin C."/>
            <person name="de Francesco M."/>
            <person name="Polissi A."/>
            <person name="Buell G."/>
            <person name="Feger G."/>
            <person name="Garcia E."/>
            <person name="Peitsch M."/>
            <person name="Garcia-Bustos J.F."/>
        </authorList>
    </citation>
    <scope>NUCLEOTIDE SEQUENCE [LARGE SCALE GENOMIC DNA]</scope>
    <source>
        <strain>G54</strain>
    </source>
</reference>
<reference key="2">
    <citation type="submission" date="2008-03" db="EMBL/GenBank/DDBJ databases">
        <title>Pneumococcal beta glucoside metabolism investigated by whole genome comparison.</title>
        <authorList>
            <person name="Mulas L."/>
            <person name="Trappetti C."/>
            <person name="Hakenbeck R."/>
            <person name="Iannelli F."/>
            <person name="Pozzi G."/>
            <person name="Davidsen T.M."/>
            <person name="Tettelin H."/>
            <person name="Oggioni M."/>
        </authorList>
    </citation>
    <scope>NUCLEOTIDE SEQUENCE [LARGE SCALE GENOMIC DNA]</scope>
    <source>
        <strain>G54</strain>
    </source>
</reference>
<proteinExistence type="inferred from homology"/>